<keyword id="KW-0963">Cytoplasm</keyword>
<keyword id="KW-0251">Elongation factor</keyword>
<keyword id="KW-0648">Protein biosynthesis</keyword>
<sequence>MASTADIKNGVVLNMDGQLWTVIEFQHVKPGKGGAFVRTKVKNVMSGKVVDRTFNAGAKIETETVDRRDFQYLYADGENFVFMDTSDYDQITLSAAQVGDAKNFMLENQDVTVALHNGEGLYVELPASVVLTITYTEPGLQGDRSTGGTKPATVETGHQIQVPLFLEQGTRVKVDTRTGDYLGRVTD</sequence>
<evidence type="ECO:0000255" key="1">
    <source>
        <dbReference type="HAMAP-Rule" id="MF_00141"/>
    </source>
</evidence>
<proteinExistence type="inferred from homology"/>
<gene>
    <name evidence="1" type="primary">efp</name>
    <name type="ordered locus">CMM_1793</name>
</gene>
<organism>
    <name type="scientific">Clavibacter michiganensis subsp. michiganensis (strain NCPPB 382)</name>
    <dbReference type="NCBI Taxonomy" id="443906"/>
    <lineage>
        <taxon>Bacteria</taxon>
        <taxon>Bacillati</taxon>
        <taxon>Actinomycetota</taxon>
        <taxon>Actinomycetes</taxon>
        <taxon>Micrococcales</taxon>
        <taxon>Microbacteriaceae</taxon>
        <taxon>Clavibacter</taxon>
    </lineage>
</organism>
<protein>
    <recommendedName>
        <fullName evidence="1">Elongation factor P</fullName>
        <shortName evidence="1">EF-P</shortName>
    </recommendedName>
</protein>
<dbReference type="EMBL" id="AM711867">
    <property type="protein sequence ID" value="CAN01849.1"/>
    <property type="molecule type" value="Genomic_DNA"/>
</dbReference>
<dbReference type="RefSeq" id="WP_012038481.1">
    <property type="nucleotide sequence ID" value="NC_009480.1"/>
</dbReference>
<dbReference type="SMR" id="A5CRY6"/>
<dbReference type="GeneID" id="92983555"/>
<dbReference type="KEGG" id="cmi:CMM_1793"/>
<dbReference type="eggNOG" id="COG0231">
    <property type="taxonomic scope" value="Bacteria"/>
</dbReference>
<dbReference type="HOGENOM" id="CLU_074944_0_1_11"/>
<dbReference type="OrthoDB" id="9801844at2"/>
<dbReference type="UniPathway" id="UPA00345"/>
<dbReference type="Proteomes" id="UP000001564">
    <property type="component" value="Chromosome"/>
</dbReference>
<dbReference type="GO" id="GO:0005737">
    <property type="term" value="C:cytoplasm"/>
    <property type="evidence" value="ECO:0007669"/>
    <property type="project" value="UniProtKB-SubCell"/>
</dbReference>
<dbReference type="GO" id="GO:0003746">
    <property type="term" value="F:translation elongation factor activity"/>
    <property type="evidence" value="ECO:0007669"/>
    <property type="project" value="UniProtKB-UniRule"/>
</dbReference>
<dbReference type="GO" id="GO:0043043">
    <property type="term" value="P:peptide biosynthetic process"/>
    <property type="evidence" value="ECO:0007669"/>
    <property type="project" value="InterPro"/>
</dbReference>
<dbReference type="CDD" id="cd04470">
    <property type="entry name" value="S1_EF-P_repeat_1"/>
    <property type="match status" value="1"/>
</dbReference>
<dbReference type="CDD" id="cd05794">
    <property type="entry name" value="S1_EF-P_repeat_2"/>
    <property type="match status" value="1"/>
</dbReference>
<dbReference type="FunFam" id="2.30.30.30:FF:000003">
    <property type="entry name" value="Elongation factor P"/>
    <property type="match status" value="1"/>
</dbReference>
<dbReference type="FunFam" id="2.40.50.140:FF:000004">
    <property type="entry name" value="Elongation factor P"/>
    <property type="match status" value="1"/>
</dbReference>
<dbReference type="FunFam" id="2.40.50.140:FF:000009">
    <property type="entry name" value="Elongation factor P"/>
    <property type="match status" value="1"/>
</dbReference>
<dbReference type="Gene3D" id="2.30.30.30">
    <property type="match status" value="1"/>
</dbReference>
<dbReference type="Gene3D" id="2.40.50.140">
    <property type="entry name" value="Nucleic acid-binding proteins"/>
    <property type="match status" value="2"/>
</dbReference>
<dbReference type="HAMAP" id="MF_00141">
    <property type="entry name" value="EF_P"/>
    <property type="match status" value="1"/>
</dbReference>
<dbReference type="InterPro" id="IPR015365">
    <property type="entry name" value="Elong-fact-P_C"/>
</dbReference>
<dbReference type="InterPro" id="IPR012340">
    <property type="entry name" value="NA-bd_OB-fold"/>
</dbReference>
<dbReference type="InterPro" id="IPR014722">
    <property type="entry name" value="Rib_uL2_dom2"/>
</dbReference>
<dbReference type="InterPro" id="IPR020599">
    <property type="entry name" value="Transl_elong_fac_P/YeiP"/>
</dbReference>
<dbReference type="InterPro" id="IPR013185">
    <property type="entry name" value="Transl_elong_KOW-like"/>
</dbReference>
<dbReference type="InterPro" id="IPR001059">
    <property type="entry name" value="Transl_elong_P/YeiP_cen"/>
</dbReference>
<dbReference type="InterPro" id="IPR013852">
    <property type="entry name" value="Transl_elong_P/YeiP_CS"/>
</dbReference>
<dbReference type="InterPro" id="IPR011768">
    <property type="entry name" value="Transl_elongation_fac_P"/>
</dbReference>
<dbReference type="InterPro" id="IPR008991">
    <property type="entry name" value="Translation_prot_SH3-like_sf"/>
</dbReference>
<dbReference type="NCBIfam" id="TIGR00038">
    <property type="entry name" value="efp"/>
    <property type="match status" value="1"/>
</dbReference>
<dbReference type="NCBIfam" id="NF001810">
    <property type="entry name" value="PRK00529.1"/>
    <property type="match status" value="1"/>
</dbReference>
<dbReference type="PANTHER" id="PTHR30053">
    <property type="entry name" value="ELONGATION FACTOR P"/>
    <property type="match status" value="1"/>
</dbReference>
<dbReference type="PANTHER" id="PTHR30053:SF12">
    <property type="entry name" value="ELONGATION FACTOR P (EF-P) FAMILY PROTEIN"/>
    <property type="match status" value="1"/>
</dbReference>
<dbReference type="Pfam" id="PF01132">
    <property type="entry name" value="EFP"/>
    <property type="match status" value="1"/>
</dbReference>
<dbReference type="Pfam" id="PF08207">
    <property type="entry name" value="EFP_N"/>
    <property type="match status" value="1"/>
</dbReference>
<dbReference type="Pfam" id="PF09285">
    <property type="entry name" value="Elong-fact-P_C"/>
    <property type="match status" value="1"/>
</dbReference>
<dbReference type="PIRSF" id="PIRSF005901">
    <property type="entry name" value="EF-P"/>
    <property type="match status" value="1"/>
</dbReference>
<dbReference type="SMART" id="SM01185">
    <property type="entry name" value="EFP"/>
    <property type="match status" value="1"/>
</dbReference>
<dbReference type="SMART" id="SM00841">
    <property type="entry name" value="Elong-fact-P_C"/>
    <property type="match status" value="1"/>
</dbReference>
<dbReference type="SUPFAM" id="SSF50249">
    <property type="entry name" value="Nucleic acid-binding proteins"/>
    <property type="match status" value="2"/>
</dbReference>
<dbReference type="SUPFAM" id="SSF50104">
    <property type="entry name" value="Translation proteins SH3-like domain"/>
    <property type="match status" value="1"/>
</dbReference>
<dbReference type="PROSITE" id="PS01275">
    <property type="entry name" value="EFP"/>
    <property type="match status" value="1"/>
</dbReference>
<accession>A5CRY6</accession>
<name>EFP_CLAM3</name>
<feature type="chain" id="PRO_1000010716" description="Elongation factor P">
    <location>
        <begin position="1"/>
        <end position="187"/>
    </location>
</feature>
<reference key="1">
    <citation type="journal article" date="2008" name="J. Bacteriol.">
        <title>The genome sequence of the tomato-pathogenic actinomycete Clavibacter michiganensis subsp. michiganensis NCPPB382 reveals a large island involved in pathogenicity.</title>
        <authorList>
            <person name="Gartemann K.-H."/>
            <person name="Abt B."/>
            <person name="Bekel T."/>
            <person name="Burger A."/>
            <person name="Engemann J."/>
            <person name="Fluegel M."/>
            <person name="Gaigalat L."/>
            <person name="Goesmann A."/>
            <person name="Graefen I."/>
            <person name="Kalinowski J."/>
            <person name="Kaup O."/>
            <person name="Kirchner O."/>
            <person name="Krause L."/>
            <person name="Linke B."/>
            <person name="McHardy A."/>
            <person name="Meyer F."/>
            <person name="Pohle S."/>
            <person name="Rueckert C."/>
            <person name="Schneiker S."/>
            <person name="Zellermann E.-M."/>
            <person name="Puehler A."/>
            <person name="Eichenlaub R."/>
            <person name="Kaiser O."/>
            <person name="Bartels D."/>
        </authorList>
    </citation>
    <scope>NUCLEOTIDE SEQUENCE [LARGE SCALE GENOMIC DNA]</scope>
    <source>
        <strain>NCPPB 382</strain>
    </source>
</reference>
<comment type="function">
    <text evidence="1">Involved in peptide bond synthesis. Stimulates efficient translation and peptide-bond synthesis on native or reconstituted 70S ribosomes in vitro. Probably functions indirectly by altering the affinity of the ribosome for aminoacyl-tRNA, thus increasing their reactivity as acceptors for peptidyl transferase.</text>
</comment>
<comment type="pathway">
    <text evidence="1">Protein biosynthesis; polypeptide chain elongation.</text>
</comment>
<comment type="subcellular location">
    <subcellularLocation>
        <location evidence="1">Cytoplasm</location>
    </subcellularLocation>
</comment>
<comment type="similarity">
    <text evidence="1">Belongs to the elongation factor P family.</text>
</comment>